<gene>
    <name evidence="1" type="primary">mscL</name>
    <name type="ordered locus">OCAR_5831</name>
    <name type="ordered locus">OCA5_c21850</name>
</gene>
<feature type="chain" id="PRO_1000094909" description="Large-conductance mechanosensitive channel">
    <location>
        <begin position="1"/>
        <end position="138"/>
    </location>
</feature>
<feature type="transmembrane region" description="Helical" evidence="1">
    <location>
        <begin position="19"/>
        <end position="39"/>
    </location>
</feature>
<feature type="transmembrane region" description="Helical" evidence="1">
    <location>
        <begin position="40"/>
        <end position="60"/>
    </location>
</feature>
<feature type="transmembrane region" description="Helical" evidence="1">
    <location>
        <begin position="81"/>
        <end position="101"/>
    </location>
</feature>
<dbReference type="EMBL" id="CP001196">
    <property type="protein sequence ID" value="ACI92956.1"/>
    <property type="molecule type" value="Genomic_DNA"/>
</dbReference>
<dbReference type="EMBL" id="CP002826">
    <property type="protein sequence ID" value="AEI06888.1"/>
    <property type="molecule type" value="Genomic_DNA"/>
</dbReference>
<dbReference type="RefSeq" id="WP_012562983.1">
    <property type="nucleotide sequence ID" value="NC_015684.1"/>
</dbReference>
<dbReference type="SMR" id="B6JGA5"/>
<dbReference type="STRING" id="504832.OCA5_c21850"/>
<dbReference type="KEGG" id="oca:OCAR_5831"/>
<dbReference type="KEGG" id="ocg:OCA5_c21850"/>
<dbReference type="PATRIC" id="fig|504832.7.peg.2307"/>
<dbReference type="eggNOG" id="COG1970">
    <property type="taxonomic scope" value="Bacteria"/>
</dbReference>
<dbReference type="HOGENOM" id="CLU_095787_0_1_5"/>
<dbReference type="OrthoDB" id="9810350at2"/>
<dbReference type="Proteomes" id="UP000007730">
    <property type="component" value="Chromosome"/>
</dbReference>
<dbReference type="GO" id="GO:0005886">
    <property type="term" value="C:plasma membrane"/>
    <property type="evidence" value="ECO:0007669"/>
    <property type="project" value="UniProtKB-SubCell"/>
</dbReference>
<dbReference type="GO" id="GO:0008381">
    <property type="term" value="F:mechanosensitive monoatomic ion channel activity"/>
    <property type="evidence" value="ECO:0007669"/>
    <property type="project" value="UniProtKB-UniRule"/>
</dbReference>
<dbReference type="FunFam" id="1.10.1200.120:FF:000001">
    <property type="entry name" value="Large-conductance mechanosensitive channel"/>
    <property type="match status" value="1"/>
</dbReference>
<dbReference type="Gene3D" id="1.10.1200.120">
    <property type="entry name" value="Large-conductance mechanosensitive channel, MscL, domain 1"/>
    <property type="match status" value="1"/>
</dbReference>
<dbReference type="HAMAP" id="MF_00115">
    <property type="entry name" value="MscL"/>
    <property type="match status" value="1"/>
</dbReference>
<dbReference type="InterPro" id="IPR019823">
    <property type="entry name" value="Mechanosensitive_channel_CS"/>
</dbReference>
<dbReference type="InterPro" id="IPR001185">
    <property type="entry name" value="MS_channel"/>
</dbReference>
<dbReference type="InterPro" id="IPR037673">
    <property type="entry name" value="MSC/AndL"/>
</dbReference>
<dbReference type="InterPro" id="IPR036019">
    <property type="entry name" value="MscL_channel"/>
</dbReference>
<dbReference type="NCBIfam" id="TIGR00220">
    <property type="entry name" value="mscL"/>
    <property type="match status" value="1"/>
</dbReference>
<dbReference type="NCBIfam" id="NF001843">
    <property type="entry name" value="PRK00567.1-4"/>
    <property type="match status" value="1"/>
</dbReference>
<dbReference type="NCBIfam" id="NF010557">
    <property type="entry name" value="PRK13952.1"/>
    <property type="match status" value="1"/>
</dbReference>
<dbReference type="PANTHER" id="PTHR30266:SF2">
    <property type="entry name" value="LARGE-CONDUCTANCE MECHANOSENSITIVE CHANNEL"/>
    <property type="match status" value="1"/>
</dbReference>
<dbReference type="PANTHER" id="PTHR30266">
    <property type="entry name" value="MECHANOSENSITIVE CHANNEL MSCL"/>
    <property type="match status" value="1"/>
</dbReference>
<dbReference type="Pfam" id="PF01741">
    <property type="entry name" value="MscL"/>
    <property type="match status" value="1"/>
</dbReference>
<dbReference type="PRINTS" id="PR01264">
    <property type="entry name" value="MECHCHANNEL"/>
</dbReference>
<dbReference type="SUPFAM" id="SSF81330">
    <property type="entry name" value="Gated mechanosensitive channel"/>
    <property type="match status" value="1"/>
</dbReference>
<dbReference type="PROSITE" id="PS01327">
    <property type="entry name" value="MSCL"/>
    <property type="match status" value="1"/>
</dbReference>
<proteinExistence type="inferred from homology"/>
<keyword id="KW-0997">Cell inner membrane</keyword>
<keyword id="KW-1003">Cell membrane</keyword>
<keyword id="KW-0407">Ion channel</keyword>
<keyword id="KW-0406">Ion transport</keyword>
<keyword id="KW-0472">Membrane</keyword>
<keyword id="KW-1185">Reference proteome</keyword>
<keyword id="KW-0812">Transmembrane</keyword>
<keyword id="KW-1133">Transmembrane helix</keyword>
<keyword id="KW-0813">Transport</keyword>
<reference key="1">
    <citation type="journal article" date="2008" name="J. Bacteriol.">
        <title>Genome sequence of the chemolithoautotrophic bacterium Oligotropha carboxidovorans OM5T.</title>
        <authorList>
            <person name="Paul D."/>
            <person name="Bridges S."/>
            <person name="Burgess S.C."/>
            <person name="Dandass Y."/>
            <person name="Lawrence M.L."/>
        </authorList>
    </citation>
    <scope>NUCLEOTIDE SEQUENCE [LARGE SCALE GENOMIC DNA]</scope>
    <source>
        <strain>ATCC 49405 / DSM 1227 / KCTC 32145 / OM5</strain>
    </source>
</reference>
<reference key="2">
    <citation type="journal article" date="2011" name="J. Bacteriol.">
        <title>Complete genome sequences of the chemolithoautotrophic Oligotropha carboxidovorans strains OM4 and OM5.</title>
        <authorList>
            <person name="Volland S."/>
            <person name="Rachinger M."/>
            <person name="Strittmatter A."/>
            <person name="Daniel R."/>
            <person name="Gottschalk G."/>
            <person name="Meyer O."/>
        </authorList>
    </citation>
    <scope>NUCLEOTIDE SEQUENCE [LARGE SCALE GENOMIC DNA]</scope>
    <source>
        <strain>ATCC 49405 / DSM 1227 / KCTC 32145 / OM5</strain>
    </source>
</reference>
<accession>B6JGA5</accession>
<accession>F8BXQ1</accession>
<comment type="function">
    <text evidence="1">Channel that opens in response to stretch forces in the membrane lipid bilayer. May participate in the regulation of osmotic pressure changes within the cell.</text>
</comment>
<comment type="subunit">
    <text evidence="1">Homopentamer.</text>
</comment>
<comment type="subcellular location">
    <subcellularLocation>
        <location evidence="1">Cell inner membrane</location>
        <topology evidence="1">Multi-pass membrane protein</topology>
    </subcellularLocation>
</comment>
<comment type="similarity">
    <text evidence="1">Belongs to the MscL family.</text>
</comment>
<protein>
    <recommendedName>
        <fullName evidence="1">Large-conductance mechanosensitive channel</fullName>
    </recommendedName>
</protein>
<sequence length="138" mass="14842">MLKEFREFAMKGNVVDLAVGVIIGAAFGAIVSSLVGDVIMPVIGAITGGLDFSNYFIGLSKEVTATNLVDAKKQGAVLAYGSFLTVTLNFLIIAFVLFIVIRLINRIKRSEEAKPAEAPAPTKDQVLLTEIRDILKTK</sequence>
<organism>
    <name type="scientific">Afipia carboxidovorans (strain ATCC 49405 / DSM 1227 / KCTC 32145 / OM5)</name>
    <name type="common">Oligotropha carboxidovorans</name>
    <dbReference type="NCBI Taxonomy" id="504832"/>
    <lineage>
        <taxon>Bacteria</taxon>
        <taxon>Pseudomonadati</taxon>
        <taxon>Pseudomonadota</taxon>
        <taxon>Alphaproteobacteria</taxon>
        <taxon>Hyphomicrobiales</taxon>
        <taxon>Nitrobacteraceae</taxon>
        <taxon>Afipia</taxon>
    </lineage>
</organism>
<name>MSCL_AFIC5</name>
<evidence type="ECO:0000255" key="1">
    <source>
        <dbReference type="HAMAP-Rule" id="MF_00115"/>
    </source>
</evidence>